<dbReference type="EC" id="4.2.1.17" evidence="1"/>
<dbReference type="EC" id="5.1.2.3" evidence="1"/>
<dbReference type="EC" id="5.3.3.8" evidence="1"/>
<dbReference type="EC" id="1.1.1.35" evidence="1"/>
<dbReference type="EMBL" id="CU928161">
    <property type="protein sequence ID" value="CAR05485.1"/>
    <property type="molecule type" value="Genomic_DNA"/>
</dbReference>
<dbReference type="RefSeq" id="WP_000966027.1">
    <property type="nucleotide sequence ID" value="NC_011742.1"/>
</dbReference>
<dbReference type="SMR" id="B7MHD1"/>
<dbReference type="KEGG" id="ecz:ECS88_4294"/>
<dbReference type="HOGENOM" id="CLU_009834_16_3_6"/>
<dbReference type="UniPathway" id="UPA00659"/>
<dbReference type="Proteomes" id="UP000000747">
    <property type="component" value="Chromosome"/>
</dbReference>
<dbReference type="GO" id="GO:0036125">
    <property type="term" value="C:fatty acid beta-oxidation multienzyme complex"/>
    <property type="evidence" value="ECO:0007669"/>
    <property type="project" value="InterPro"/>
</dbReference>
<dbReference type="GO" id="GO:0008692">
    <property type="term" value="F:3-hydroxybutyryl-CoA epimerase activity"/>
    <property type="evidence" value="ECO:0007669"/>
    <property type="project" value="UniProtKB-UniRule"/>
</dbReference>
<dbReference type="GO" id="GO:0004165">
    <property type="term" value="F:delta(3)-delta(2)-enoyl-CoA isomerase activity"/>
    <property type="evidence" value="ECO:0007669"/>
    <property type="project" value="UniProtKB-UniRule"/>
</dbReference>
<dbReference type="GO" id="GO:0004300">
    <property type="term" value="F:enoyl-CoA hydratase activity"/>
    <property type="evidence" value="ECO:0007669"/>
    <property type="project" value="UniProtKB-UniRule"/>
</dbReference>
<dbReference type="GO" id="GO:0016509">
    <property type="term" value="F:long-chain-3-hydroxyacyl-CoA dehydrogenase activity"/>
    <property type="evidence" value="ECO:0007669"/>
    <property type="project" value="TreeGrafter"/>
</dbReference>
<dbReference type="GO" id="GO:0070403">
    <property type="term" value="F:NAD+ binding"/>
    <property type="evidence" value="ECO:0007669"/>
    <property type="project" value="InterPro"/>
</dbReference>
<dbReference type="GO" id="GO:0006635">
    <property type="term" value="P:fatty acid beta-oxidation"/>
    <property type="evidence" value="ECO:0007669"/>
    <property type="project" value="UniProtKB-UniRule"/>
</dbReference>
<dbReference type="CDD" id="cd06558">
    <property type="entry name" value="crotonase-like"/>
    <property type="match status" value="1"/>
</dbReference>
<dbReference type="FunFam" id="1.10.1040.50:FF:000001">
    <property type="entry name" value="Fatty acid oxidation complex subunit alpha"/>
    <property type="match status" value="1"/>
</dbReference>
<dbReference type="FunFam" id="3.90.226.10:FF:000018">
    <property type="entry name" value="Fatty acid oxidation complex subunit alpha"/>
    <property type="match status" value="1"/>
</dbReference>
<dbReference type="FunFam" id="3.40.50.720:FF:000009">
    <property type="entry name" value="Fatty oxidation complex, alpha subunit"/>
    <property type="match status" value="1"/>
</dbReference>
<dbReference type="Gene3D" id="1.10.1040.50">
    <property type="match status" value="1"/>
</dbReference>
<dbReference type="Gene3D" id="3.90.226.10">
    <property type="entry name" value="2-enoyl-CoA Hydratase, Chain A, domain 1"/>
    <property type="match status" value="1"/>
</dbReference>
<dbReference type="Gene3D" id="3.40.50.720">
    <property type="entry name" value="NAD(P)-binding Rossmann-like Domain"/>
    <property type="match status" value="1"/>
</dbReference>
<dbReference type="HAMAP" id="MF_01621">
    <property type="entry name" value="FadB"/>
    <property type="match status" value="1"/>
</dbReference>
<dbReference type="InterPro" id="IPR006180">
    <property type="entry name" value="3-OHacyl-CoA_DH_CS"/>
</dbReference>
<dbReference type="InterPro" id="IPR006176">
    <property type="entry name" value="3-OHacyl-CoA_DH_NAD-bd"/>
</dbReference>
<dbReference type="InterPro" id="IPR006108">
    <property type="entry name" value="3HC_DH_C"/>
</dbReference>
<dbReference type="InterPro" id="IPR008927">
    <property type="entry name" value="6-PGluconate_DH-like_C_sf"/>
</dbReference>
<dbReference type="InterPro" id="IPR029045">
    <property type="entry name" value="ClpP/crotonase-like_dom_sf"/>
</dbReference>
<dbReference type="InterPro" id="IPR018376">
    <property type="entry name" value="Enoyl-CoA_hyd/isom_CS"/>
</dbReference>
<dbReference type="InterPro" id="IPR001753">
    <property type="entry name" value="Enoyl-CoA_hydra/iso"/>
</dbReference>
<dbReference type="InterPro" id="IPR050136">
    <property type="entry name" value="FA_oxidation_alpha_subunit"/>
</dbReference>
<dbReference type="InterPro" id="IPR012799">
    <property type="entry name" value="FadB"/>
</dbReference>
<dbReference type="InterPro" id="IPR036291">
    <property type="entry name" value="NAD(P)-bd_dom_sf"/>
</dbReference>
<dbReference type="NCBIfam" id="TIGR02437">
    <property type="entry name" value="FadB"/>
    <property type="match status" value="1"/>
</dbReference>
<dbReference type="NCBIfam" id="NF008727">
    <property type="entry name" value="PRK11730.1"/>
    <property type="match status" value="1"/>
</dbReference>
<dbReference type="PANTHER" id="PTHR43612">
    <property type="entry name" value="TRIFUNCTIONAL ENZYME SUBUNIT ALPHA"/>
    <property type="match status" value="1"/>
</dbReference>
<dbReference type="PANTHER" id="PTHR43612:SF3">
    <property type="entry name" value="TRIFUNCTIONAL ENZYME SUBUNIT ALPHA, MITOCHONDRIAL"/>
    <property type="match status" value="1"/>
</dbReference>
<dbReference type="Pfam" id="PF00725">
    <property type="entry name" value="3HCDH"/>
    <property type="match status" value="2"/>
</dbReference>
<dbReference type="Pfam" id="PF02737">
    <property type="entry name" value="3HCDH_N"/>
    <property type="match status" value="1"/>
</dbReference>
<dbReference type="Pfam" id="PF00378">
    <property type="entry name" value="ECH_1"/>
    <property type="match status" value="1"/>
</dbReference>
<dbReference type="SUPFAM" id="SSF48179">
    <property type="entry name" value="6-phosphogluconate dehydrogenase C-terminal domain-like"/>
    <property type="match status" value="2"/>
</dbReference>
<dbReference type="SUPFAM" id="SSF52096">
    <property type="entry name" value="ClpP/crotonase"/>
    <property type="match status" value="1"/>
</dbReference>
<dbReference type="SUPFAM" id="SSF51735">
    <property type="entry name" value="NAD(P)-binding Rossmann-fold domains"/>
    <property type="match status" value="1"/>
</dbReference>
<dbReference type="PROSITE" id="PS00067">
    <property type="entry name" value="3HCDH"/>
    <property type="match status" value="1"/>
</dbReference>
<dbReference type="PROSITE" id="PS00166">
    <property type="entry name" value="ENOYL_COA_HYDRATASE"/>
    <property type="match status" value="1"/>
</dbReference>
<evidence type="ECO:0000255" key="1">
    <source>
        <dbReference type="HAMAP-Rule" id="MF_01621"/>
    </source>
</evidence>
<evidence type="ECO:0000256" key="2">
    <source>
        <dbReference type="SAM" id="MobiDB-lite"/>
    </source>
</evidence>
<keyword id="KW-0276">Fatty acid metabolism</keyword>
<keyword id="KW-0413">Isomerase</keyword>
<keyword id="KW-0442">Lipid degradation</keyword>
<keyword id="KW-0443">Lipid metabolism</keyword>
<keyword id="KW-0456">Lyase</keyword>
<keyword id="KW-0511">Multifunctional enzyme</keyword>
<keyword id="KW-0520">NAD</keyword>
<keyword id="KW-0560">Oxidoreductase</keyword>
<keyword id="KW-1185">Reference proteome</keyword>
<comment type="function">
    <text evidence="1">Involved in the aerobic and anaerobic degradation of long-chain fatty acids via beta-oxidation cycle. Catalyzes the formation of 3-oxoacyl-CoA from enoyl-CoA via L-3-hydroxyacyl-CoA. It can also use D-3-hydroxyacyl-CoA and cis-3-enoyl-CoA as substrate.</text>
</comment>
<comment type="catalytic activity">
    <reaction evidence="1">
        <text>a (3S)-3-hydroxyacyl-CoA + NAD(+) = a 3-oxoacyl-CoA + NADH + H(+)</text>
        <dbReference type="Rhea" id="RHEA:22432"/>
        <dbReference type="ChEBI" id="CHEBI:15378"/>
        <dbReference type="ChEBI" id="CHEBI:57318"/>
        <dbReference type="ChEBI" id="CHEBI:57540"/>
        <dbReference type="ChEBI" id="CHEBI:57945"/>
        <dbReference type="ChEBI" id="CHEBI:90726"/>
        <dbReference type="EC" id="1.1.1.35"/>
    </reaction>
</comment>
<comment type="catalytic activity">
    <reaction evidence="1">
        <text>a (3S)-3-hydroxyacyl-CoA = a (2E)-enoyl-CoA + H2O</text>
        <dbReference type="Rhea" id="RHEA:16105"/>
        <dbReference type="ChEBI" id="CHEBI:15377"/>
        <dbReference type="ChEBI" id="CHEBI:57318"/>
        <dbReference type="ChEBI" id="CHEBI:58856"/>
        <dbReference type="EC" id="4.2.1.17"/>
    </reaction>
</comment>
<comment type="catalytic activity">
    <reaction evidence="1">
        <text>a 4-saturated-(3S)-3-hydroxyacyl-CoA = a (3E)-enoyl-CoA + H2O</text>
        <dbReference type="Rhea" id="RHEA:20724"/>
        <dbReference type="ChEBI" id="CHEBI:15377"/>
        <dbReference type="ChEBI" id="CHEBI:58521"/>
        <dbReference type="ChEBI" id="CHEBI:137480"/>
        <dbReference type="EC" id="4.2.1.17"/>
    </reaction>
</comment>
<comment type="catalytic activity">
    <reaction evidence="1">
        <text>(3S)-3-hydroxybutanoyl-CoA = (3R)-3-hydroxybutanoyl-CoA</text>
        <dbReference type="Rhea" id="RHEA:21760"/>
        <dbReference type="ChEBI" id="CHEBI:57315"/>
        <dbReference type="ChEBI" id="CHEBI:57316"/>
        <dbReference type="EC" id="5.1.2.3"/>
    </reaction>
</comment>
<comment type="catalytic activity">
    <reaction evidence="1">
        <text>a (3Z)-enoyl-CoA = a 4-saturated (2E)-enoyl-CoA</text>
        <dbReference type="Rhea" id="RHEA:45900"/>
        <dbReference type="ChEBI" id="CHEBI:85097"/>
        <dbReference type="ChEBI" id="CHEBI:85489"/>
        <dbReference type="EC" id="5.3.3.8"/>
    </reaction>
</comment>
<comment type="catalytic activity">
    <reaction evidence="1">
        <text>a (3E)-enoyl-CoA = a 4-saturated (2E)-enoyl-CoA</text>
        <dbReference type="Rhea" id="RHEA:45228"/>
        <dbReference type="ChEBI" id="CHEBI:58521"/>
        <dbReference type="ChEBI" id="CHEBI:85097"/>
        <dbReference type="EC" id="5.3.3.8"/>
    </reaction>
</comment>
<comment type="pathway">
    <text evidence="1">Lipid metabolism; fatty acid beta-oxidation.</text>
</comment>
<comment type="subunit">
    <text evidence="1">Heterotetramer of two alpha chains (FadB) and two beta chains (FadA).</text>
</comment>
<comment type="similarity">
    <text evidence="1">In the N-terminal section; belongs to the enoyl-CoA hydratase/isomerase family.</text>
</comment>
<comment type="similarity">
    <text evidence="1">In the C-terminal section; belongs to the 3-hydroxyacyl-CoA dehydrogenase family.</text>
</comment>
<accession>B7MHD1</accession>
<feature type="chain" id="PRO_1000186033" description="Fatty acid oxidation complex subunit alpha">
    <location>
        <begin position="1"/>
        <end position="729"/>
    </location>
</feature>
<feature type="region of interest" description="Enoyl-CoA hydratase/isomerase" evidence="1">
    <location>
        <begin position="1"/>
        <end position="189"/>
    </location>
</feature>
<feature type="region of interest" description="3-hydroxyacyl-CoA dehydrogenase" evidence="1">
    <location>
        <begin position="311"/>
        <end position="729"/>
    </location>
</feature>
<feature type="region of interest" description="Disordered" evidence="2">
    <location>
        <begin position="708"/>
        <end position="729"/>
    </location>
</feature>
<feature type="active site" description="For 3-hydroxyacyl-CoA dehydrogenase activity" evidence="1">
    <location>
        <position position="450"/>
    </location>
</feature>
<feature type="binding site" evidence="1">
    <location>
        <position position="296"/>
    </location>
    <ligand>
        <name>substrate</name>
    </ligand>
</feature>
<feature type="binding site" evidence="1">
    <location>
        <position position="324"/>
    </location>
    <ligand>
        <name>NAD(+)</name>
        <dbReference type="ChEBI" id="CHEBI:57540"/>
    </ligand>
</feature>
<feature type="binding site" evidence="1">
    <location>
        <position position="343"/>
    </location>
    <ligand>
        <name>NAD(+)</name>
        <dbReference type="ChEBI" id="CHEBI:57540"/>
    </ligand>
</feature>
<feature type="binding site" evidence="1">
    <location>
        <begin position="400"/>
        <end position="402"/>
    </location>
    <ligand>
        <name>NAD(+)</name>
        <dbReference type="ChEBI" id="CHEBI:57540"/>
    </ligand>
</feature>
<feature type="binding site" evidence="1">
    <location>
        <position position="407"/>
    </location>
    <ligand>
        <name>NAD(+)</name>
        <dbReference type="ChEBI" id="CHEBI:57540"/>
    </ligand>
</feature>
<feature type="binding site" evidence="1">
    <location>
        <position position="429"/>
    </location>
    <ligand>
        <name>NAD(+)</name>
        <dbReference type="ChEBI" id="CHEBI:57540"/>
    </ligand>
</feature>
<feature type="binding site" evidence="1">
    <location>
        <position position="453"/>
    </location>
    <ligand>
        <name>NAD(+)</name>
        <dbReference type="ChEBI" id="CHEBI:57540"/>
    </ligand>
</feature>
<feature type="binding site" evidence="1">
    <location>
        <position position="500"/>
    </location>
    <ligand>
        <name>substrate</name>
    </ligand>
</feature>
<feature type="binding site" evidence="1">
    <location>
        <position position="660"/>
    </location>
    <ligand>
        <name>substrate</name>
    </ligand>
</feature>
<feature type="site" description="Important for catalytic activity" evidence="1">
    <location>
        <position position="119"/>
    </location>
</feature>
<feature type="site" description="Important for catalytic activity" evidence="1">
    <location>
        <position position="139"/>
    </location>
</feature>
<proteinExistence type="inferred from homology"/>
<reference key="1">
    <citation type="journal article" date="2009" name="PLoS Genet.">
        <title>Organised genome dynamics in the Escherichia coli species results in highly diverse adaptive paths.</title>
        <authorList>
            <person name="Touchon M."/>
            <person name="Hoede C."/>
            <person name="Tenaillon O."/>
            <person name="Barbe V."/>
            <person name="Baeriswyl S."/>
            <person name="Bidet P."/>
            <person name="Bingen E."/>
            <person name="Bonacorsi S."/>
            <person name="Bouchier C."/>
            <person name="Bouvet O."/>
            <person name="Calteau A."/>
            <person name="Chiapello H."/>
            <person name="Clermont O."/>
            <person name="Cruveiller S."/>
            <person name="Danchin A."/>
            <person name="Diard M."/>
            <person name="Dossat C."/>
            <person name="Karoui M.E."/>
            <person name="Frapy E."/>
            <person name="Garry L."/>
            <person name="Ghigo J.M."/>
            <person name="Gilles A.M."/>
            <person name="Johnson J."/>
            <person name="Le Bouguenec C."/>
            <person name="Lescat M."/>
            <person name="Mangenot S."/>
            <person name="Martinez-Jehanne V."/>
            <person name="Matic I."/>
            <person name="Nassif X."/>
            <person name="Oztas S."/>
            <person name="Petit M.A."/>
            <person name="Pichon C."/>
            <person name="Rouy Z."/>
            <person name="Ruf C.S."/>
            <person name="Schneider D."/>
            <person name="Tourret J."/>
            <person name="Vacherie B."/>
            <person name="Vallenet D."/>
            <person name="Medigue C."/>
            <person name="Rocha E.P.C."/>
            <person name="Denamur E."/>
        </authorList>
    </citation>
    <scope>NUCLEOTIDE SEQUENCE [LARGE SCALE GENOMIC DNA]</scope>
    <source>
        <strain>S88 / ExPEC</strain>
    </source>
</reference>
<name>FADB_ECO45</name>
<sequence>MLYKGDTLYLDWLEDGIAELVFDTPGSVNKLDTATVASLGEAIGVLEQQSDLKGLLLRSNKAAFIVGADITEFLSLFLVPEEQLSQWLHFANSVFNRLEDLPVPTIAAVNGYALGGGCECVLATDYRLATPDLRIGLPETKLGIMPGFGGSVRMPRMLGADSALEIIAAGKDVGADQALKIGLVDGVVKAEKLVEGAIAILRQAINGDLDWKAKRQPKLEPLKLSKIEAAMSFTIAKGMVAQTAGKHYPAPITAVKTIEAAARFGREEALNLENKSFVPLAHTNEARALVGIFLNDQYVKGKAKKLTKDVETPKQAAVLGAGIMGGGIAYQSAWKGVPVVMKDINDKSLTLGMTEAAKLLNKQLERGKIDGLKLAGVISTIHPTLDYAGFDRVDVVVEAVVENPKVKKAVLAETEQKVRPDTVLASNTSTIPISELANALERPENFCGMHFFNPVHRMPLVEIIRGEKSSDETIAKVVAWASKMGKTPIVVNDCPGFFVNRVLFPYFAGFSQLLRDGAGFRKIDKVMEKQFGWPMGPAYLLDVVGIDTAHHAQAVMAAGFPQRMQKDYRDAIDALFDANRFGQKNGLGFWRYKEDSKGKPKKEEDVVVDDLLAKVSQPKRDFSEEEIIARMMIPMVNEVVRCLEEGIIATPAEADMALVYGLGFPPFHGGAFRWLDTLGSAKYLDMAQQYQHLGPLYEVPEGLRNKARHNEPYYPPVEPARPVGDLKTA</sequence>
<protein>
    <recommendedName>
        <fullName evidence="1">Fatty acid oxidation complex subunit alpha</fullName>
    </recommendedName>
    <domain>
        <recommendedName>
            <fullName evidence="1">Enoyl-CoA hydratase/Delta(3)-cis-Delta(2)-trans-enoyl-CoA isomerase/3-hydroxybutyryl-CoA epimerase</fullName>
            <ecNumber evidence="1">4.2.1.17</ecNumber>
            <ecNumber evidence="1">5.1.2.3</ecNumber>
            <ecNumber evidence="1">5.3.3.8</ecNumber>
        </recommendedName>
    </domain>
    <domain>
        <recommendedName>
            <fullName evidence="1">3-hydroxyacyl-CoA dehydrogenase</fullName>
            <ecNumber evidence="1">1.1.1.35</ecNumber>
        </recommendedName>
    </domain>
</protein>
<gene>
    <name evidence="1" type="primary">fadB</name>
    <name type="ordered locus">ECS88_4294</name>
</gene>
<organism>
    <name type="scientific">Escherichia coli O45:K1 (strain S88 / ExPEC)</name>
    <dbReference type="NCBI Taxonomy" id="585035"/>
    <lineage>
        <taxon>Bacteria</taxon>
        <taxon>Pseudomonadati</taxon>
        <taxon>Pseudomonadota</taxon>
        <taxon>Gammaproteobacteria</taxon>
        <taxon>Enterobacterales</taxon>
        <taxon>Enterobacteriaceae</taxon>
        <taxon>Escherichia</taxon>
    </lineage>
</organism>